<proteinExistence type="inferred from homology"/>
<evidence type="ECO:0000255" key="1">
    <source>
        <dbReference type="HAMAP-Rule" id="MF_00195"/>
    </source>
</evidence>
<feature type="chain" id="PRO_0000178970" description="GTPase Der">
    <location>
        <begin position="1"/>
        <end position="451"/>
    </location>
</feature>
<feature type="domain" description="EngA-type G 1">
    <location>
        <begin position="5"/>
        <end position="170"/>
    </location>
</feature>
<feature type="domain" description="EngA-type G 2">
    <location>
        <begin position="186"/>
        <end position="359"/>
    </location>
</feature>
<feature type="domain" description="KH-like" evidence="1">
    <location>
        <begin position="360"/>
        <end position="444"/>
    </location>
</feature>
<feature type="binding site" evidence="1">
    <location>
        <begin position="11"/>
        <end position="18"/>
    </location>
    <ligand>
        <name>GTP</name>
        <dbReference type="ChEBI" id="CHEBI:37565"/>
        <label>1</label>
    </ligand>
</feature>
<feature type="binding site" evidence="1">
    <location>
        <begin position="58"/>
        <end position="62"/>
    </location>
    <ligand>
        <name>GTP</name>
        <dbReference type="ChEBI" id="CHEBI:37565"/>
        <label>1</label>
    </ligand>
</feature>
<feature type="binding site" evidence="1">
    <location>
        <begin position="122"/>
        <end position="125"/>
    </location>
    <ligand>
        <name>GTP</name>
        <dbReference type="ChEBI" id="CHEBI:37565"/>
        <label>1</label>
    </ligand>
</feature>
<feature type="binding site" evidence="1">
    <location>
        <begin position="192"/>
        <end position="199"/>
    </location>
    <ligand>
        <name>GTP</name>
        <dbReference type="ChEBI" id="CHEBI:37565"/>
        <label>2</label>
    </ligand>
</feature>
<feature type="binding site" evidence="1">
    <location>
        <begin position="239"/>
        <end position="243"/>
    </location>
    <ligand>
        <name>GTP</name>
        <dbReference type="ChEBI" id="CHEBI:37565"/>
        <label>2</label>
    </ligand>
</feature>
<feature type="binding site" evidence="1">
    <location>
        <begin position="304"/>
        <end position="307"/>
    </location>
    <ligand>
        <name>GTP</name>
        <dbReference type="ChEBI" id="CHEBI:37565"/>
        <label>2</label>
    </ligand>
</feature>
<keyword id="KW-0342">GTP-binding</keyword>
<keyword id="KW-0547">Nucleotide-binding</keyword>
<keyword id="KW-1185">Reference proteome</keyword>
<keyword id="KW-0677">Repeat</keyword>
<keyword id="KW-0690">Ribosome biogenesis</keyword>
<accession>Q7VWL4</accession>
<sequence length="451" mass="49428">MSFKPVVALVGRPNVGKSTLFNRLTRSRAALVADFSGLTRDRHYGEGRVGDTPFLVIDTGGFEPVAKDGILAEMARQTRQAIAEADVVVFLVDARAGVNAHDHEIARLLRKSGQQRVLLAVNKAEGMGVGNATGDFHELGLGEPHPISAAHGDGIVDLIEIALSGLVAPPADTGEQLEQDVVDHRIKLAIVGRPNVGKSTLINTLLGEERVIAFDMPGTTRDAIEIDFERDGRKYTLIDTAGLRKRGKVFEAIEKFSVIKTLQAIEASNVVLLMIDAQAEVSEQDAHIAGFVLETGRAVVVAINKWDGLDSDQRERIEREFQRKLRFLGFARMHTISALKGQGVKPLLKSVNAAHAAAFAKLSTPRLTRELQAAVEQQPPPRKGIFRPKMRYAHQGGQNPPLIVIHGNALDAVPDSYRRYLETRFRNAFDLAGTPLRIEFKSSRNPYVQEN</sequence>
<comment type="function">
    <text evidence="1">GTPase that plays an essential role in the late steps of ribosome biogenesis.</text>
</comment>
<comment type="subunit">
    <text evidence="1">Associates with the 50S ribosomal subunit.</text>
</comment>
<comment type="similarity">
    <text evidence="1">Belongs to the TRAFAC class TrmE-Era-EngA-EngB-Septin-like GTPase superfamily. EngA (Der) GTPase family.</text>
</comment>
<reference key="1">
    <citation type="journal article" date="2003" name="Nat. Genet.">
        <title>Comparative analysis of the genome sequences of Bordetella pertussis, Bordetella parapertussis and Bordetella bronchiseptica.</title>
        <authorList>
            <person name="Parkhill J."/>
            <person name="Sebaihia M."/>
            <person name="Preston A."/>
            <person name="Murphy L.D."/>
            <person name="Thomson N.R."/>
            <person name="Harris D.E."/>
            <person name="Holden M.T.G."/>
            <person name="Churcher C.M."/>
            <person name="Bentley S.D."/>
            <person name="Mungall K.L."/>
            <person name="Cerdeno-Tarraga A.-M."/>
            <person name="Temple L."/>
            <person name="James K.D."/>
            <person name="Harris B."/>
            <person name="Quail M.A."/>
            <person name="Achtman M."/>
            <person name="Atkin R."/>
            <person name="Baker S."/>
            <person name="Basham D."/>
            <person name="Bason N."/>
            <person name="Cherevach I."/>
            <person name="Chillingworth T."/>
            <person name="Collins M."/>
            <person name="Cronin A."/>
            <person name="Davis P."/>
            <person name="Doggett J."/>
            <person name="Feltwell T."/>
            <person name="Goble A."/>
            <person name="Hamlin N."/>
            <person name="Hauser H."/>
            <person name="Holroyd S."/>
            <person name="Jagels K."/>
            <person name="Leather S."/>
            <person name="Moule S."/>
            <person name="Norberczak H."/>
            <person name="O'Neil S."/>
            <person name="Ormond D."/>
            <person name="Price C."/>
            <person name="Rabbinowitsch E."/>
            <person name="Rutter S."/>
            <person name="Sanders M."/>
            <person name="Saunders D."/>
            <person name="Seeger K."/>
            <person name="Sharp S."/>
            <person name="Simmonds M."/>
            <person name="Skelton J."/>
            <person name="Squares R."/>
            <person name="Squares S."/>
            <person name="Stevens K."/>
            <person name="Unwin L."/>
            <person name="Whitehead S."/>
            <person name="Barrell B.G."/>
            <person name="Maskell D.J."/>
        </authorList>
    </citation>
    <scope>NUCLEOTIDE SEQUENCE [LARGE SCALE GENOMIC DNA]</scope>
    <source>
        <strain>Tohama I / ATCC BAA-589 / NCTC 13251</strain>
    </source>
</reference>
<dbReference type="EMBL" id="BX640417">
    <property type="protein sequence ID" value="CAE42473.1"/>
    <property type="molecule type" value="Genomic_DNA"/>
</dbReference>
<dbReference type="RefSeq" id="NP_880843.1">
    <property type="nucleotide sequence ID" value="NC_002929.2"/>
</dbReference>
<dbReference type="RefSeq" id="WP_003810703.1">
    <property type="nucleotide sequence ID" value="NZ_CP039022.1"/>
</dbReference>
<dbReference type="SMR" id="Q7VWL4"/>
<dbReference type="STRING" id="257313.BP2195"/>
<dbReference type="PaxDb" id="257313-BP2195"/>
<dbReference type="GeneID" id="93204638"/>
<dbReference type="KEGG" id="bpe:BP2195"/>
<dbReference type="PATRIC" id="fig|257313.5.peg.2369"/>
<dbReference type="eggNOG" id="COG1160">
    <property type="taxonomic scope" value="Bacteria"/>
</dbReference>
<dbReference type="HOGENOM" id="CLU_016077_5_0_4"/>
<dbReference type="Proteomes" id="UP000002676">
    <property type="component" value="Chromosome"/>
</dbReference>
<dbReference type="GO" id="GO:0016887">
    <property type="term" value="F:ATP hydrolysis activity"/>
    <property type="evidence" value="ECO:0007669"/>
    <property type="project" value="InterPro"/>
</dbReference>
<dbReference type="GO" id="GO:0005525">
    <property type="term" value="F:GTP binding"/>
    <property type="evidence" value="ECO:0007669"/>
    <property type="project" value="UniProtKB-UniRule"/>
</dbReference>
<dbReference type="GO" id="GO:0043022">
    <property type="term" value="F:ribosome binding"/>
    <property type="evidence" value="ECO:0007669"/>
    <property type="project" value="TreeGrafter"/>
</dbReference>
<dbReference type="GO" id="GO:0042254">
    <property type="term" value="P:ribosome biogenesis"/>
    <property type="evidence" value="ECO:0007669"/>
    <property type="project" value="UniProtKB-KW"/>
</dbReference>
<dbReference type="CDD" id="cd01894">
    <property type="entry name" value="EngA1"/>
    <property type="match status" value="1"/>
</dbReference>
<dbReference type="CDD" id="cd01895">
    <property type="entry name" value="EngA2"/>
    <property type="match status" value="1"/>
</dbReference>
<dbReference type="FunFam" id="3.30.300.20:FF:000004">
    <property type="entry name" value="GTPase Der"/>
    <property type="match status" value="1"/>
</dbReference>
<dbReference type="FunFam" id="3.40.50.300:FF:000040">
    <property type="entry name" value="GTPase Der"/>
    <property type="match status" value="1"/>
</dbReference>
<dbReference type="FunFam" id="3.40.50.300:FF:000057">
    <property type="entry name" value="GTPase Der"/>
    <property type="match status" value="1"/>
</dbReference>
<dbReference type="Gene3D" id="3.30.300.20">
    <property type="match status" value="1"/>
</dbReference>
<dbReference type="Gene3D" id="3.40.50.300">
    <property type="entry name" value="P-loop containing nucleotide triphosphate hydrolases"/>
    <property type="match status" value="2"/>
</dbReference>
<dbReference type="HAMAP" id="MF_00195">
    <property type="entry name" value="GTPase_Der"/>
    <property type="match status" value="1"/>
</dbReference>
<dbReference type="InterPro" id="IPR003593">
    <property type="entry name" value="AAA+_ATPase"/>
</dbReference>
<dbReference type="InterPro" id="IPR031166">
    <property type="entry name" value="G_ENGA"/>
</dbReference>
<dbReference type="InterPro" id="IPR006073">
    <property type="entry name" value="GTP-bd"/>
</dbReference>
<dbReference type="InterPro" id="IPR016484">
    <property type="entry name" value="GTPase_Der"/>
</dbReference>
<dbReference type="InterPro" id="IPR032859">
    <property type="entry name" value="KH_dom-like"/>
</dbReference>
<dbReference type="InterPro" id="IPR015946">
    <property type="entry name" value="KH_dom-like_a/b"/>
</dbReference>
<dbReference type="InterPro" id="IPR027417">
    <property type="entry name" value="P-loop_NTPase"/>
</dbReference>
<dbReference type="InterPro" id="IPR005225">
    <property type="entry name" value="Small_GTP-bd"/>
</dbReference>
<dbReference type="NCBIfam" id="TIGR03594">
    <property type="entry name" value="GTPase_EngA"/>
    <property type="match status" value="1"/>
</dbReference>
<dbReference type="NCBIfam" id="TIGR00231">
    <property type="entry name" value="small_GTP"/>
    <property type="match status" value="2"/>
</dbReference>
<dbReference type="PANTHER" id="PTHR43834">
    <property type="entry name" value="GTPASE DER"/>
    <property type="match status" value="1"/>
</dbReference>
<dbReference type="PANTHER" id="PTHR43834:SF6">
    <property type="entry name" value="GTPASE DER"/>
    <property type="match status" value="1"/>
</dbReference>
<dbReference type="Pfam" id="PF14714">
    <property type="entry name" value="KH_dom-like"/>
    <property type="match status" value="1"/>
</dbReference>
<dbReference type="Pfam" id="PF01926">
    <property type="entry name" value="MMR_HSR1"/>
    <property type="match status" value="2"/>
</dbReference>
<dbReference type="PIRSF" id="PIRSF006485">
    <property type="entry name" value="GTP-binding_EngA"/>
    <property type="match status" value="1"/>
</dbReference>
<dbReference type="PRINTS" id="PR00326">
    <property type="entry name" value="GTP1OBG"/>
</dbReference>
<dbReference type="SMART" id="SM00382">
    <property type="entry name" value="AAA"/>
    <property type="match status" value="2"/>
</dbReference>
<dbReference type="SUPFAM" id="SSF52540">
    <property type="entry name" value="P-loop containing nucleoside triphosphate hydrolases"/>
    <property type="match status" value="2"/>
</dbReference>
<dbReference type="PROSITE" id="PS51712">
    <property type="entry name" value="G_ENGA"/>
    <property type="match status" value="2"/>
</dbReference>
<protein>
    <recommendedName>
        <fullName evidence="1">GTPase Der</fullName>
    </recommendedName>
    <alternativeName>
        <fullName evidence="1">GTP-binding protein EngA</fullName>
    </alternativeName>
</protein>
<gene>
    <name evidence="1" type="primary">der</name>
    <name type="synonym">engA</name>
    <name type="ordered locus">BP2195</name>
</gene>
<organism>
    <name type="scientific">Bordetella pertussis (strain Tohama I / ATCC BAA-589 / NCTC 13251)</name>
    <dbReference type="NCBI Taxonomy" id="257313"/>
    <lineage>
        <taxon>Bacteria</taxon>
        <taxon>Pseudomonadati</taxon>
        <taxon>Pseudomonadota</taxon>
        <taxon>Betaproteobacteria</taxon>
        <taxon>Burkholderiales</taxon>
        <taxon>Alcaligenaceae</taxon>
        <taxon>Bordetella</taxon>
    </lineage>
</organism>
<name>DER_BORPE</name>